<proteinExistence type="evidence at protein level"/>
<dbReference type="EMBL" id="AK003300">
    <property type="protein sequence ID" value="BAB22701.1"/>
    <property type="molecule type" value="mRNA"/>
</dbReference>
<dbReference type="EMBL" id="AK002678">
    <property type="protein sequence ID" value="BAB22280.1"/>
    <property type="molecule type" value="mRNA"/>
</dbReference>
<dbReference type="EMBL" id="BC034787">
    <property type="protein sequence ID" value="AAH34787.1"/>
    <property type="molecule type" value="mRNA"/>
</dbReference>
<dbReference type="CCDS" id="CCDS22455.1"/>
<dbReference type="RefSeq" id="NP_080119.1">
    <property type="nucleotide sequence ID" value="NM_025843.3"/>
</dbReference>
<dbReference type="PDB" id="6G2J">
    <property type="method" value="EM"/>
    <property type="resolution" value="3.30 A"/>
    <property type="chains" value="o=1-137"/>
</dbReference>
<dbReference type="PDB" id="6G72">
    <property type="method" value="EM"/>
    <property type="resolution" value="3.90 A"/>
    <property type="chains" value="o=1-137"/>
</dbReference>
<dbReference type="PDB" id="6ZR2">
    <property type="method" value="EM"/>
    <property type="resolution" value="3.10 A"/>
    <property type="chains" value="o=1-137"/>
</dbReference>
<dbReference type="PDB" id="6ZTQ">
    <property type="method" value="EM"/>
    <property type="resolution" value="3.00 A"/>
    <property type="chains" value="o=1-137"/>
</dbReference>
<dbReference type="PDB" id="7AK5">
    <property type="method" value="EM"/>
    <property type="resolution" value="3.17 A"/>
    <property type="chains" value="o=1-137"/>
</dbReference>
<dbReference type="PDB" id="7AK6">
    <property type="method" value="EM"/>
    <property type="resolution" value="3.82 A"/>
    <property type="chains" value="o=1-137"/>
</dbReference>
<dbReference type="PDB" id="7B93">
    <property type="method" value="EM"/>
    <property type="resolution" value="3.04 A"/>
    <property type="chains" value="o=1-137"/>
</dbReference>
<dbReference type="PDB" id="7PSA">
    <property type="method" value="EM"/>
    <property type="resolution" value="3.40 A"/>
    <property type="chains" value="o=1-137"/>
</dbReference>
<dbReference type="PDB" id="8C2S">
    <property type="method" value="EM"/>
    <property type="resolution" value="3.90 A"/>
    <property type="chains" value="o=1-137"/>
</dbReference>
<dbReference type="PDB" id="8CA3">
    <property type="method" value="EM"/>
    <property type="resolution" value="3.20 A"/>
    <property type="chains" value="o=1-137"/>
</dbReference>
<dbReference type="PDB" id="8CA5">
    <property type="method" value="EM"/>
    <property type="resolution" value="3.90 A"/>
    <property type="chains" value="o=1-137"/>
</dbReference>
<dbReference type="PDB" id="8IAO">
    <property type="method" value="EM"/>
    <property type="resolution" value="4.20 A"/>
    <property type="chains" value="o=1-137"/>
</dbReference>
<dbReference type="PDB" id="8IAQ">
    <property type="method" value="EM"/>
    <property type="resolution" value="3.40 A"/>
    <property type="chains" value="o=1-137"/>
</dbReference>
<dbReference type="PDB" id="8IB4">
    <property type="method" value="EM"/>
    <property type="resolution" value="4.30 A"/>
    <property type="chains" value="o=1-137"/>
</dbReference>
<dbReference type="PDB" id="8IB6">
    <property type="method" value="EM"/>
    <property type="resolution" value="3.30 A"/>
    <property type="chains" value="o=1-137"/>
</dbReference>
<dbReference type="PDB" id="8IB9">
    <property type="method" value="EM"/>
    <property type="resolution" value="4.30 A"/>
    <property type="chains" value="o=1-137"/>
</dbReference>
<dbReference type="PDB" id="8IBB">
    <property type="method" value="EM"/>
    <property type="resolution" value="3.30 A"/>
    <property type="chains" value="o=1-137"/>
</dbReference>
<dbReference type="PDB" id="8IBD">
    <property type="method" value="EM"/>
    <property type="resolution" value="4.20 A"/>
    <property type="chains" value="o=1-137"/>
</dbReference>
<dbReference type="PDB" id="8IBF">
    <property type="method" value="EM"/>
    <property type="resolution" value="3.30 A"/>
    <property type="chains" value="o=1-137"/>
</dbReference>
<dbReference type="PDB" id="8IC2">
    <property type="method" value="EM"/>
    <property type="resolution" value="6.30 A"/>
    <property type="chains" value="o=1-137"/>
</dbReference>
<dbReference type="PDB" id="8IC4">
    <property type="method" value="EM"/>
    <property type="resolution" value="3.20 A"/>
    <property type="chains" value="o=1-137"/>
</dbReference>
<dbReference type="PDB" id="8OLT">
    <property type="method" value="EM"/>
    <property type="resolution" value="2.84 A"/>
    <property type="chains" value="o=1-137"/>
</dbReference>
<dbReference type="PDB" id="8OM1">
    <property type="method" value="EM"/>
    <property type="resolution" value="2.39 A"/>
    <property type="chains" value="o=2-137"/>
</dbReference>
<dbReference type="PDB" id="8PW5">
    <property type="method" value="EM"/>
    <property type="resolution" value="3.60 A"/>
    <property type="chains" value="o1=1-137"/>
</dbReference>
<dbReference type="PDB" id="8PW6">
    <property type="method" value="EM"/>
    <property type="resolution" value="3.30 A"/>
    <property type="chains" value="o1=1-137"/>
</dbReference>
<dbReference type="PDB" id="8PW7">
    <property type="method" value="EM"/>
    <property type="resolution" value="3.50 A"/>
    <property type="chains" value="o1=1-137"/>
</dbReference>
<dbReference type="PDB" id="8RGP">
    <property type="method" value="EM"/>
    <property type="resolution" value="3.00 A"/>
    <property type="chains" value="o=1-137"/>
</dbReference>
<dbReference type="PDB" id="8RGQ">
    <property type="method" value="EM"/>
    <property type="resolution" value="3.00 A"/>
    <property type="chains" value="o=1-137"/>
</dbReference>
<dbReference type="PDB" id="8RGR">
    <property type="method" value="EM"/>
    <property type="resolution" value="2.90 A"/>
    <property type="chains" value="o=1-137"/>
</dbReference>
<dbReference type="PDB" id="8RGT">
    <property type="method" value="EM"/>
    <property type="resolution" value="3.10 A"/>
    <property type="chains" value="o=1-137"/>
</dbReference>
<dbReference type="PDB" id="8UCA">
    <property type="method" value="EM"/>
    <property type="resolution" value="3.70 A"/>
    <property type="chains" value="B7/b7=2-137"/>
</dbReference>
<dbReference type="PDBsum" id="6G2J"/>
<dbReference type="PDBsum" id="6G72"/>
<dbReference type="PDBsum" id="6ZR2"/>
<dbReference type="PDBsum" id="6ZTQ"/>
<dbReference type="PDBsum" id="7AK5"/>
<dbReference type="PDBsum" id="7AK6"/>
<dbReference type="PDBsum" id="7B93"/>
<dbReference type="PDBsum" id="7PSA"/>
<dbReference type="PDBsum" id="8C2S"/>
<dbReference type="PDBsum" id="8CA3"/>
<dbReference type="PDBsum" id="8CA5"/>
<dbReference type="PDBsum" id="8IAO"/>
<dbReference type="PDBsum" id="8IAQ"/>
<dbReference type="PDBsum" id="8IB4"/>
<dbReference type="PDBsum" id="8IB6"/>
<dbReference type="PDBsum" id="8IB9"/>
<dbReference type="PDBsum" id="8IBB"/>
<dbReference type="PDBsum" id="8IBD"/>
<dbReference type="PDBsum" id="8IBF"/>
<dbReference type="PDBsum" id="8IC2"/>
<dbReference type="PDBsum" id="8IC4"/>
<dbReference type="PDBsum" id="8OLT"/>
<dbReference type="PDBsum" id="8OM1"/>
<dbReference type="PDBsum" id="8PW5"/>
<dbReference type="PDBsum" id="8PW6"/>
<dbReference type="PDBsum" id="8PW7"/>
<dbReference type="PDBsum" id="8RGP"/>
<dbReference type="PDBsum" id="8RGQ"/>
<dbReference type="PDBsum" id="8RGR"/>
<dbReference type="PDBsum" id="8RGT"/>
<dbReference type="PDBsum" id="8UCA"/>
<dbReference type="EMDB" id="EMD-11377"/>
<dbReference type="EMDB" id="EMD-11424"/>
<dbReference type="EMDB" id="EMD-11810"/>
<dbReference type="EMDB" id="EMD-11811"/>
<dbReference type="EMDB" id="EMD-12095"/>
<dbReference type="EMDB" id="EMD-13611"/>
<dbReference type="EMDB" id="EMD-16398"/>
<dbReference type="EMDB" id="EMD-16516"/>
<dbReference type="EMDB" id="EMD-16518"/>
<dbReference type="EMDB" id="EMD-16962"/>
<dbReference type="EMDB" id="EMD-16965"/>
<dbReference type="EMDB" id="EMD-17989"/>
<dbReference type="EMDB" id="EMD-17990"/>
<dbReference type="EMDB" id="EMD-17991"/>
<dbReference type="EMDB" id="EMD-19145"/>
<dbReference type="EMDB" id="EMD-19146"/>
<dbReference type="EMDB" id="EMD-19147"/>
<dbReference type="EMDB" id="EMD-19148"/>
<dbReference type="EMDB" id="EMD-35313"/>
<dbReference type="EMDB" id="EMD-35315"/>
<dbReference type="EMDB" id="EMD-35331"/>
<dbReference type="EMDB" id="EMD-35333"/>
<dbReference type="EMDB" id="EMD-35336"/>
<dbReference type="EMDB" id="EMD-35338"/>
<dbReference type="EMDB" id="EMD-35340"/>
<dbReference type="EMDB" id="EMD-35342"/>
<dbReference type="EMDB" id="EMD-35352"/>
<dbReference type="EMDB" id="EMD-35354"/>
<dbReference type="EMDB" id="EMD-42122"/>
<dbReference type="EMDB" id="EMD-4345"/>
<dbReference type="EMDB" id="EMD-4356"/>
<dbReference type="SMR" id="Q9CR61"/>
<dbReference type="BioGRID" id="211808">
    <property type="interactions" value="62"/>
</dbReference>
<dbReference type="ComplexPortal" id="CPX-266">
    <property type="entry name" value="Mitochondrial respiratory chain complex I"/>
</dbReference>
<dbReference type="CORUM" id="Q9CR61"/>
<dbReference type="FunCoup" id="Q9CR61">
    <property type="interactions" value="2475"/>
</dbReference>
<dbReference type="IntAct" id="Q9CR61">
    <property type="interactions" value="2"/>
</dbReference>
<dbReference type="STRING" id="10090.ENSMUSP00000037341"/>
<dbReference type="GlyGen" id="Q9CR61">
    <property type="glycosylation" value="1 site, 1 O-linked glycan (1 site)"/>
</dbReference>
<dbReference type="iPTMnet" id="Q9CR61"/>
<dbReference type="PhosphoSitePlus" id="Q9CR61"/>
<dbReference type="SwissPalm" id="Q9CR61"/>
<dbReference type="jPOST" id="Q9CR61"/>
<dbReference type="PaxDb" id="10090-ENSMUSP00000037341"/>
<dbReference type="PeptideAtlas" id="Q9CR61"/>
<dbReference type="ProteomicsDB" id="252942"/>
<dbReference type="Pumba" id="Q9CR61"/>
<dbReference type="Antibodypedia" id="1259">
    <property type="antibodies" value="150 antibodies from 30 providers"/>
</dbReference>
<dbReference type="DNASU" id="66916"/>
<dbReference type="Ensembl" id="ENSMUST00000036996.6">
    <property type="protein sequence ID" value="ENSMUSP00000037341.6"/>
    <property type="gene ID" value="ENSMUSG00000033938.6"/>
</dbReference>
<dbReference type="GeneID" id="66916"/>
<dbReference type="KEGG" id="mmu:66916"/>
<dbReference type="UCSC" id="uc009mkk.1">
    <property type="organism name" value="mouse"/>
</dbReference>
<dbReference type="AGR" id="MGI:1914166"/>
<dbReference type="CTD" id="4713"/>
<dbReference type="MGI" id="MGI:1914166">
    <property type="gene designation" value="Ndufb7"/>
</dbReference>
<dbReference type="VEuPathDB" id="HostDB:ENSMUSG00000033938"/>
<dbReference type="eggNOG" id="KOG3468">
    <property type="taxonomic scope" value="Eukaryota"/>
</dbReference>
<dbReference type="GeneTree" id="ENSGT00390000018759"/>
<dbReference type="HOGENOM" id="CLU_154847_1_0_1"/>
<dbReference type="InParanoid" id="Q9CR61"/>
<dbReference type="OMA" id="FVYQCAH"/>
<dbReference type="OrthoDB" id="268414at2759"/>
<dbReference type="PhylomeDB" id="Q9CR61"/>
<dbReference type="TreeFam" id="TF315152"/>
<dbReference type="Reactome" id="R-MMU-611105">
    <property type="pathway name" value="Respiratory electron transport"/>
</dbReference>
<dbReference type="Reactome" id="R-MMU-6799198">
    <property type="pathway name" value="Complex I biogenesis"/>
</dbReference>
<dbReference type="BioGRID-ORCS" id="66916">
    <property type="hits" value="17 hits in 79 CRISPR screens"/>
</dbReference>
<dbReference type="ChiTaRS" id="Ndufb7">
    <property type="organism name" value="mouse"/>
</dbReference>
<dbReference type="PRO" id="PR:Q9CR61"/>
<dbReference type="Proteomes" id="UP000000589">
    <property type="component" value="Chromosome 8"/>
</dbReference>
<dbReference type="RNAct" id="Q9CR61">
    <property type="molecule type" value="protein"/>
</dbReference>
<dbReference type="Bgee" id="ENSMUSG00000033938">
    <property type="expression patterns" value="Expressed in aortic valve and 266 other cell types or tissues"/>
</dbReference>
<dbReference type="GO" id="GO:0005743">
    <property type="term" value="C:mitochondrial inner membrane"/>
    <property type="evidence" value="ECO:0000314"/>
    <property type="project" value="UniProtKB"/>
</dbReference>
<dbReference type="GO" id="GO:0005758">
    <property type="term" value="C:mitochondrial intermembrane space"/>
    <property type="evidence" value="ECO:0007669"/>
    <property type="project" value="UniProtKB-SubCell"/>
</dbReference>
<dbReference type="GO" id="GO:0005739">
    <property type="term" value="C:mitochondrion"/>
    <property type="evidence" value="ECO:0007005"/>
    <property type="project" value="MGI"/>
</dbReference>
<dbReference type="GO" id="GO:0045271">
    <property type="term" value="C:respiratory chain complex I"/>
    <property type="evidence" value="ECO:0000314"/>
    <property type="project" value="UniProtKB"/>
</dbReference>
<dbReference type="GO" id="GO:0008137">
    <property type="term" value="F:NADH dehydrogenase (ubiquinone) activity"/>
    <property type="evidence" value="ECO:0000250"/>
    <property type="project" value="UniProtKB"/>
</dbReference>
<dbReference type="GO" id="GO:0009060">
    <property type="term" value="P:aerobic respiration"/>
    <property type="evidence" value="ECO:0000303"/>
    <property type="project" value="ComplexPortal"/>
</dbReference>
<dbReference type="GO" id="GO:0042776">
    <property type="term" value="P:proton motive force-driven mitochondrial ATP synthesis"/>
    <property type="evidence" value="ECO:0000303"/>
    <property type="project" value="ComplexPortal"/>
</dbReference>
<dbReference type="InterPro" id="IPR008698">
    <property type="entry name" value="NDUB7"/>
</dbReference>
<dbReference type="PANTHER" id="PTHR20900:SF0">
    <property type="entry name" value="NADH DEHYDROGENASE [UBIQUINONE] 1 BETA SUBCOMPLEX SUBUNIT 7"/>
    <property type="match status" value="1"/>
</dbReference>
<dbReference type="PANTHER" id="PTHR20900">
    <property type="entry name" value="NADH:UBIQUINONE OXIDOREDUCTASE B18-LIKE SUBUNIT"/>
    <property type="match status" value="1"/>
</dbReference>
<dbReference type="Pfam" id="PF05676">
    <property type="entry name" value="NDUF_B7"/>
    <property type="match status" value="1"/>
</dbReference>
<dbReference type="PROSITE" id="PS51808">
    <property type="entry name" value="CHCH"/>
    <property type="match status" value="1"/>
</dbReference>
<evidence type="ECO:0000250" key="1"/>
<evidence type="ECO:0000250" key="2">
    <source>
        <dbReference type="UniProtKB" id="P17568"/>
    </source>
</evidence>
<evidence type="ECO:0000255" key="3">
    <source>
        <dbReference type="PROSITE-ProRule" id="PRU01150"/>
    </source>
</evidence>
<evidence type="ECO:0000269" key="4">
    <source>
    </source>
</evidence>
<evidence type="ECO:0000305" key="5"/>
<evidence type="ECO:0007744" key="6">
    <source>
        <dbReference type="PDB" id="8PW5"/>
    </source>
</evidence>
<evidence type="ECO:0007744" key="7">
    <source>
    </source>
</evidence>
<evidence type="ECO:0007829" key="8">
    <source>
        <dbReference type="PDB" id="8OM1"/>
    </source>
</evidence>
<evidence type="ECO:0007829" key="9">
    <source>
        <dbReference type="PDB" id="8RGR"/>
    </source>
</evidence>
<sequence>MGAHLTRRYLWDASVEPDPEKIPSFPPDLGFPERKERVMVATQQEMMDAQLTLQQRDYCAHYLIRLLKCKRDSFPNFLACKHEQHDWDYCEHLDYVKRMKEFERERRLLQRKKRRALKEARVAQGQGEGEVGPEVAL</sequence>
<organism>
    <name type="scientific">Mus musculus</name>
    <name type="common">Mouse</name>
    <dbReference type="NCBI Taxonomy" id="10090"/>
    <lineage>
        <taxon>Eukaryota</taxon>
        <taxon>Metazoa</taxon>
        <taxon>Chordata</taxon>
        <taxon>Craniata</taxon>
        <taxon>Vertebrata</taxon>
        <taxon>Euteleostomi</taxon>
        <taxon>Mammalia</taxon>
        <taxon>Eutheria</taxon>
        <taxon>Euarchontoglires</taxon>
        <taxon>Glires</taxon>
        <taxon>Rodentia</taxon>
        <taxon>Myomorpha</taxon>
        <taxon>Muroidea</taxon>
        <taxon>Muridae</taxon>
        <taxon>Murinae</taxon>
        <taxon>Mus</taxon>
        <taxon>Mus</taxon>
    </lineage>
</organism>
<comment type="function">
    <text evidence="4">Accessory subunit of the mitochondrial membrane respiratory chain NADH dehydrogenase (Complex I), that is believed not to be involved in catalysis. Complex I functions in the transfer of electrons from NADH to the respiratory chain. The immediate electron acceptor for the enzyme is believed to be ubiquinone.</text>
</comment>
<comment type="subunit">
    <text evidence="4">Complex I is composed of 45 different subunits.</text>
</comment>
<comment type="subcellular location">
    <subcellularLocation>
        <location evidence="4">Mitochondrion inner membrane</location>
        <topology evidence="4">Peripheral membrane protein</topology>
    </subcellularLocation>
    <subcellularLocation>
        <location evidence="4">Mitochondrion intermembrane space</location>
    </subcellularLocation>
</comment>
<comment type="domain">
    <text evidence="2">Contains two C-X9-C motifs that are predicted to form a helix-coil-helix structure, permitting the formation of intramolecular disulfide bonds.</text>
</comment>
<comment type="similarity">
    <text evidence="5">Belongs to the complex I NDUFB7 subunit family.</text>
</comment>
<keyword id="KW-0002">3D-structure</keyword>
<keyword id="KW-0903">Direct protein sequencing</keyword>
<keyword id="KW-1015">Disulfide bond</keyword>
<keyword id="KW-0249">Electron transport</keyword>
<keyword id="KW-0449">Lipoprotein</keyword>
<keyword id="KW-0472">Membrane</keyword>
<keyword id="KW-0496">Mitochondrion</keyword>
<keyword id="KW-0999">Mitochondrion inner membrane</keyword>
<keyword id="KW-0519">Myristate</keyword>
<keyword id="KW-0597">Phosphoprotein</keyword>
<keyword id="KW-1185">Reference proteome</keyword>
<keyword id="KW-0679">Respiratory chain</keyword>
<keyword id="KW-0813">Transport</keyword>
<name>NDUB7_MOUSE</name>
<gene>
    <name type="primary">Ndufb7</name>
</gene>
<reference key="1">
    <citation type="journal article" date="2005" name="Science">
        <title>The transcriptional landscape of the mammalian genome.</title>
        <authorList>
            <person name="Carninci P."/>
            <person name="Kasukawa T."/>
            <person name="Katayama S."/>
            <person name="Gough J."/>
            <person name="Frith M.C."/>
            <person name="Maeda N."/>
            <person name="Oyama R."/>
            <person name="Ravasi T."/>
            <person name="Lenhard B."/>
            <person name="Wells C."/>
            <person name="Kodzius R."/>
            <person name="Shimokawa K."/>
            <person name="Bajic V.B."/>
            <person name="Brenner S.E."/>
            <person name="Batalov S."/>
            <person name="Forrest A.R."/>
            <person name="Zavolan M."/>
            <person name="Davis M.J."/>
            <person name="Wilming L.G."/>
            <person name="Aidinis V."/>
            <person name="Allen J.E."/>
            <person name="Ambesi-Impiombato A."/>
            <person name="Apweiler R."/>
            <person name="Aturaliya R.N."/>
            <person name="Bailey T.L."/>
            <person name="Bansal M."/>
            <person name="Baxter L."/>
            <person name="Beisel K.W."/>
            <person name="Bersano T."/>
            <person name="Bono H."/>
            <person name="Chalk A.M."/>
            <person name="Chiu K.P."/>
            <person name="Choudhary V."/>
            <person name="Christoffels A."/>
            <person name="Clutterbuck D.R."/>
            <person name="Crowe M.L."/>
            <person name="Dalla E."/>
            <person name="Dalrymple B.P."/>
            <person name="de Bono B."/>
            <person name="Della Gatta G."/>
            <person name="di Bernardo D."/>
            <person name="Down T."/>
            <person name="Engstrom P."/>
            <person name="Fagiolini M."/>
            <person name="Faulkner G."/>
            <person name="Fletcher C.F."/>
            <person name="Fukushima T."/>
            <person name="Furuno M."/>
            <person name="Futaki S."/>
            <person name="Gariboldi M."/>
            <person name="Georgii-Hemming P."/>
            <person name="Gingeras T.R."/>
            <person name="Gojobori T."/>
            <person name="Green R.E."/>
            <person name="Gustincich S."/>
            <person name="Harbers M."/>
            <person name="Hayashi Y."/>
            <person name="Hensch T.K."/>
            <person name="Hirokawa N."/>
            <person name="Hill D."/>
            <person name="Huminiecki L."/>
            <person name="Iacono M."/>
            <person name="Ikeo K."/>
            <person name="Iwama A."/>
            <person name="Ishikawa T."/>
            <person name="Jakt M."/>
            <person name="Kanapin A."/>
            <person name="Katoh M."/>
            <person name="Kawasawa Y."/>
            <person name="Kelso J."/>
            <person name="Kitamura H."/>
            <person name="Kitano H."/>
            <person name="Kollias G."/>
            <person name="Krishnan S.P."/>
            <person name="Kruger A."/>
            <person name="Kummerfeld S.K."/>
            <person name="Kurochkin I.V."/>
            <person name="Lareau L.F."/>
            <person name="Lazarevic D."/>
            <person name="Lipovich L."/>
            <person name="Liu J."/>
            <person name="Liuni S."/>
            <person name="McWilliam S."/>
            <person name="Madan Babu M."/>
            <person name="Madera M."/>
            <person name="Marchionni L."/>
            <person name="Matsuda H."/>
            <person name="Matsuzawa S."/>
            <person name="Miki H."/>
            <person name="Mignone F."/>
            <person name="Miyake S."/>
            <person name="Morris K."/>
            <person name="Mottagui-Tabar S."/>
            <person name="Mulder N."/>
            <person name="Nakano N."/>
            <person name="Nakauchi H."/>
            <person name="Ng P."/>
            <person name="Nilsson R."/>
            <person name="Nishiguchi S."/>
            <person name="Nishikawa S."/>
            <person name="Nori F."/>
            <person name="Ohara O."/>
            <person name="Okazaki Y."/>
            <person name="Orlando V."/>
            <person name="Pang K.C."/>
            <person name="Pavan W.J."/>
            <person name="Pavesi G."/>
            <person name="Pesole G."/>
            <person name="Petrovsky N."/>
            <person name="Piazza S."/>
            <person name="Reed J."/>
            <person name="Reid J.F."/>
            <person name="Ring B.Z."/>
            <person name="Ringwald M."/>
            <person name="Rost B."/>
            <person name="Ruan Y."/>
            <person name="Salzberg S.L."/>
            <person name="Sandelin A."/>
            <person name="Schneider C."/>
            <person name="Schoenbach C."/>
            <person name="Sekiguchi K."/>
            <person name="Semple C.A."/>
            <person name="Seno S."/>
            <person name="Sessa L."/>
            <person name="Sheng Y."/>
            <person name="Shibata Y."/>
            <person name="Shimada H."/>
            <person name="Shimada K."/>
            <person name="Silva D."/>
            <person name="Sinclair B."/>
            <person name="Sperling S."/>
            <person name="Stupka E."/>
            <person name="Sugiura K."/>
            <person name="Sultana R."/>
            <person name="Takenaka Y."/>
            <person name="Taki K."/>
            <person name="Tammoja K."/>
            <person name="Tan S.L."/>
            <person name="Tang S."/>
            <person name="Taylor M.S."/>
            <person name="Tegner J."/>
            <person name="Teichmann S.A."/>
            <person name="Ueda H.R."/>
            <person name="van Nimwegen E."/>
            <person name="Verardo R."/>
            <person name="Wei C.L."/>
            <person name="Yagi K."/>
            <person name="Yamanishi H."/>
            <person name="Zabarovsky E."/>
            <person name="Zhu S."/>
            <person name="Zimmer A."/>
            <person name="Hide W."/>
            <person name="Bult C."/>
            <person name="Grimmond S.M."/>
            <person name="Teasdale R.D."/>
            <person name="Liu E.T."/>
            <person name="Brusic V."/>
            <person name="Quackenbush J."/>
            <person name="Wahlestedt C."/>
            <person name="Mattick J.S."/>
            <person name="Hume D.A."/>
            <person name="Kai C."/>
            <person name="Sasaki D."/>
            <person name="Tomaru Y."/>
            <person name="Fukuda S."/>
            <person name="Kanamori-Katayama M."/>
            <person name="Suzuki M."/>
            <person name="Aoki J."/>
            <person name="Arakawa T."/>
            <person name="Iida J."/>
            <person name="Imamura K."/>
            <person name="Itoh M."/>
            <person name="Kato T."/>
            <person name="Kawaji H."/>
            <person name="Kawagashira N."/>
            <person name="Kawashima T."/>
            <person name="Kojima M."/>
            <person name="Kondo S."/>
            <person name="Konno H."/>
            <person name="Nakano K."/>
            <person name="Ninomiya N."/>
            <person name="Nishio T."/>
            <person name="Okada M."/>
            <person name="Plessy C."/>
            <person name="Shibata K."/>
            <person name="Shiraki T."/>
            <person name="Suzuki S."/>
            <person name="Tagami M."/>
            <person name="Waki K."/>
            <person name="Watahiki A."/>
            <person name="Okamura-Oho Y."/>
            <person name="Suzuki H."/>
            <person name="Kawai J."/>
            <person name="Hayashizaki Y."/>
        </authorList>
    </citation>
    <scope>NUCLEOTIDE SEQUENCE [LARGE SCALE MRNA]</scope>
    <source>
        <strain>C57BL/6J</strain>
        <tissue>Embryo</tissue>
        <tissue>Kidney</tissue>
    </source>
</reference>
<reference key="2">
    <citation type="journal article" date="2004" name="Genome Res.">
        <title>The status, quality, and expansion of the NIH full-length cDNA project: the Mammalian Gene Collection (MGC).</title>
        <authorList>
            <consortium name="The MGC Project Team"/>
        </authorList>
    </citation>
    <scope>NUCLEOTIDE SEQUENCE [LARGE SCALE MRNA]</scope>
    <source>
        <tissue>Salivary gland</tissue>
    </source>
</reference>
<reference key="3">
    <citation type="submission" date="2007-04" db="UniProtKB">
        <authorList>
            <person name="Lubec G."/>
            <person name="Kang S.U."/>
        </authorList>
    </citation>
    <scope>PROTEIN SEQUENCE OF 8-35; 38-65; 72-97 AND 122-137</scope>
    <scope>IDENTIFICATION BY MASS SPECTROMETRY</scope>
    <source>
        <strain>C57BL/6J</strain>
        <tissue>Brain</tissue>
    </source>
</reference>
<reference key="4">
    <citation type="journal article" date="2010" name="Cell">
        <title>A tissue-specific atlas of mouse protein phosphorylation and expression.</title>
        <authorList>
            <person name="Huttlin E.L."/>
            <person name="Jedrychowski M.P."/>
            <person name="Elias J.E."/>
            <person name="Goswami T."/>
            <person name="Rad R."/>
            <person name="Beausoleil S.A."/>
            <person name="Villen J."/>
            <person name="Haas W."/>
            <person name="Sowa M.E."/>
            <person name="Gygi S.P."/>
        </authorList>
    </citation>
    <scope>PHOSPHORYLATION [LARGE SCALE ANALYSIS] AT SER-73</scope>
    <scope>IDENTIFICATION BY MASS SPECTROMETRY [LARGE SCALE ANALYSIS]</scope>
    <source>
        <tissue>Brain</tissue>
        <tissue>Brown adipose tissue</tissue>
        <tissue>Heart</tissue>
        <tissue>Kidney</tissue>
        <tissue>Liver</tissue>
        <tissue>Lung</tissue>
        <tissue>Pancreas</tissue>
        <tissue>Spleen</tissue>
        <tissue>Testis</tissue>
    </source>
</reference>
<reference evidence="6" key="5">
    <citation type="journal article" date="2024" name="Nat. Struct. Mol. Biol.">
        <title>SCAF1 drives the compositional diversity of mammalian respirasomes.</title>
        <authorList>
            <person name="Vercellino I."/>
            <person name="Sazanov L.A."/>
        </authorList>
    </citation>
    <scope>STRUCTURE BY ELECTRON MICROSCOPY (3.60 ANGSTROMS) IN COMPLEX WITH MITOCHONDRIAL RESPIRATORY SUPERCOMPLEX</scope>
    <scope>FUNCTION</scope>
    <scope>SUBCELLULAR LOCATION</scope>
    <scope>SUBUNIT</scope>
</reference>
<protein>
    <recommendedName>
        <fullName>NADH dehydrogenase [ubiquinone] 1 beta subcomplex subunit 7</fullName>
    </recommendedName>
    <alternativeName>
        <fullName>Complex I-B18</fullName>
        <shortName>CI-B18</shortName>
    </alternativeName>
    <alternativeName>
        <fullName>NADH-ubiquinone oxidoreductase B18 subunit</fullName>
    </alternativeName>
</protein>
<feature type="initiator methionine" description="Removed">
    <location>
        <position position="1"/>
    </location>
</feature>
<feature type="chain" id="PRO_0000118812" description="NADH dehydrogenase [ubiquinone] 1 beta subcomplex subunit 7">
    <location>
        <begin position="2"/>
        <end position="137"/>
    </location>
</feature>
<feature type="domain" description="CHCH" evidence="3">
    <location>
        <begin position="56"/>
        <end position="98"/>
    </location>
</feature>
<feature type="short sequence motif" description="Cx9C motif 1" evidence="3">
    <location>
        <begin position="59"/>
        <end position="69"/>
    </location>
</feature>
<feature type="short sequence motif" description="Cx9C motif 2" evidence="3">
    <location>
        <begin position="80"/>
        <end position="90"/>
    </location>
</feature>
<feature type="modified residue" description="Phosphoserine" evidence="7">
    <location>
        <position position="73"/>
    </location>
</feature>
<feature type="lipid moiety-binding region" description="N-myristoyl glycine" evidence="1">
    <location>
        <position position="2"/>
    </location>
</feature>
<feature type="disulfide bond" evidence="3">
    <location>
        <begin position="59"/>
        <end position="90"/>
    </location>
</feature>
<feature type="disulfide bond" evidence="3">
    <location>
        <begin position="69"/>
        <end position="80"/>
    </location>
</feature>
<feature type="helix" evidence="8">
    <location>
        <begin position="3"/>
        <end position="8"/>
    </location>
</feature>
<feature type="strand" evidence="8">
    <location>
        <begin position="9"/>
        <end position="11"/>
    </location>
</feature>
<feature type="strand" evidence="9">
    <location>
        <begin position="13"/>
        <end position="16"/>
    </location>
</feature>
<feature type="strand" evidence="9">
    <location>
        <begin position="19"/>
        <end position="21"/>
    </location>
</feature>
<feature type="turn" evidence="8">
    <location>
        <begin position="27"/>
        <end position="30"/>
    </location>
</feature>
<feature type="helix" evidence="8">
    <location>
        <begin position="43"/>
        <end position="48"/>
    </location>
</feature>
<feature type="helix" evidence="8">
    <location>
        <begin position="53"/>
        <end position="55"/>
    </location>
</feature>
<feature type="helix" evidence="8">
    <location>
        <begin position="60"/>
        <end position="73"/>
    </location>
</feature>
<feature type="turn" evidence="8">
    <location>
        <begin position="77"/>
        <end position="80"/>
    </location>
</feature>
<feature type="helix" evidence="8">
    <location>
        <begin position="81"/>
        <end position="119"/>
    </location>
</feature>
<accession>Q9CR61</accession>